<organism>
    <name type="scientific">Mycobacterium bovis (strain ATCC BAA-935 / AF2122/97)</name>
    <dbReference type="NCBI Taxonomy" id="233413"/>
    <lineage>
        <taxon>Bacteria</taxon>
        <taxon>Bacillati</taxon>
        <taxon>Actinomycetota</taxon>
        <taxon>Actinomycetes</taxon>
        <taxon>Mycobacteriales</taxon>
        <taxon>Mycobacteriaceae</taxon>
        <taxon>Mycobacterium</taxon>
        <taxon>Mycobacterium tuberculosis complex</taxon>
    </lineage>
</organism>
<feature type="chain" id="PRO_0000129857" description="Small ribosomal subunit protein uS19">
    <location>
        <begin position="1"/>
        <end position="93"/>
    </location>
</feature>
<feature type="sequence conflict" description="In Ref. 1; AAB28302." evidence="2" ref="1">
    <original>T</original>
    <variation>R</variation>
    <location>
        <position position="79"/>
    </location>
</feature>
<accession>P0A5X5</accession>
<accession>A0A1R3XW95</accession>
<accession>O08118</accession>
<accession>P48947</accession>
<accession>P95053</accession>
<accession>X2BFY0</accession>
<comment type="function">
    <text evidence="1">Protein S19 forms a complex with S13 that binds strongly to the 16S ribosomal RNA.</text>
</comment>
<comment type="similarity">
    <text evidence="2">Belongs to the universal ribosomal protein uS19 family.</text>
</comment>
<proteinExistence type="evidence at protein level"/>
<keyword id="KW-0903">Direct protein sequencing</keyword>
<keyword id="KW-1185">Reference proteome</keyword>
<keyword id="KW-0687">Ribonucleoprotein</keyword>
<keyword id="KW-0689">Ribosomal protein</keyword>
<keyword id="KW-0694">RNA-binding</keyword>
<keyword id="KW-0699">rRNA-binding</keyword>
<sequence>MPRSLKKGPFVDEHLLKKVDVQNEKNTKQVIKTWSRRSTIIPDFIGHTFAVHDGRKHVPVFVTESMVGHKLGEFAPTRTFKGHIKDDRKSKRR</sequence>
<name>RS19_MYCBO</name>
<reference key="1">
    <citation type="journal article" date="1993" name="FEBS Lett.">
        <title>Isolation and amino acid sequence of the 30S ribosomal protein S19 from Mycobacterium bovis BCG.</title>
        <authorList>
            <person name="Ohara N."/>
            <person name="Kimura M."/>
            <person name="Higashi Y."/>
            <person name="Yamada T."/>
        </authorList>
    </citation>
    <scope>NUCLEOTIDE SEQUENCE [GENOMIC DNA]</scope>
    <scope>PROTEIN SEQUENCE OF 1-15</scope>
    <source>
        <strain>BCG</strain>
    </source>
</reference>
<reference key="2">
    <citation type="journal article" date="1997" name="Mol. Microbiol.">
        <title>The role of ribosomal RNAs in macrolide resistance.</title>
        <authorList>
            <person name="Sander P."/>
            <person name="Prammananan T."/>
            <person name="Meier A."/>
            <person name="Frischkorn K."/>
            <person name="Boettger E.C."/>
        </authorList>
    </citation>
    <scope>NUCLEOTIDE SEQUENCE [GENOMIC DNA]</scope>
    <source>
        <strain>BCG</strain>
    </source>
</reference>
<reference key="3">
    <citation type="journal article" date="2003" name="Proc. Natl. Acad. Sci. U.S.A.">
        <title>The complete genome sequence of Mycobacterium bovis.</title>
        <authorList>
            <person name="Garnier T."/>
            <person name="Eiglmeier K."/>
            <person name="Camus J.-C."/>
            <person name="Medina N."/>
            <person name="Mansoor H."/>
            <person name="Pryor M."/>
            <person name="Duthoy S."/>
            <person name="Grondin S."/>
            <person name="Lacroix C."/>
            <person name="Monsempe C."/>
            <person name="Simon S."/>
            <person name="Harris B."/>
            <person name="Atkin R."/>
            <person name="Doggett J."/>
            <person name="Mayes R."/>
            <person name="Keating L."/>
            <person name="Wheeler P.R."/>
            <person name="Parkhill J."/>
            <person name="Barrell B.G."/>
            <person name="Cole S.T."/>
            <person name="Gordon S.V."/>
            <person name="Hewinson R.G."/>
        </authorList>
    </citation>
    <scope>NUCLEOTIDE SEQUENCE [LARGE SCALE GENOMIC DNA]</scope>
    <source>
        <strain>ATCC BAA-935 / AF2122/97</strain>
    </source>
</reference>
<reference key="4">
    <citation type="journal article" date="2017" name="Genome Announc.">
        <title>Updated reference genome sequence and annotation of Mycobacterium bovis AF2122/97.</title>
        <authorList>
            <person name="Malone K.M."/>
            <person name="Farrell D."/>
            <person name="Stuber T.P."/>
            <person name="Schubert O.T."/>
            <person name="Aebersold R."/>
            <person name="Robbe-Austerman S."/>
            <person name="Gordon S.V."/>
        </authorList>
    </citation>
    <scope>NUCLEOTIDE SEQUENCE [LARGE SCALE GENOMIC DNA]</scope>
    <scope>GENOME REANNOTATION</scope>
    <source>
        <strain>ATCC BAA-935 / AF2122/97</strain>
    </source>
</reference>
<gene>
    <name type="primary">rpsS</name>
    <name type="ordered locus">BQ2027_MB0725</name>
</gene>
<evidence type="ECO:0000250" key="1"/>
<evidence type="ECO:0000305" key="2"/>
<dbReference type="EMBL" id="S65565">
    <property type="protein sequence ID" value="AAB28302.1"/>
    <property type="molecule type" value="Genomic_DNA"/>
</dbReference>
<dbReference type="EMBL" id="Y13228">
    <property type="protein sequence ID" value="CAA73676.1"/>
    <property type="molecule type" value="Genomic_DNA"/>
</dbReference>
<dbReference type="EMBL" id="LT708304">
    <property type="protein sequence ID" value="SIT99324.1"/>
    <property type="molecule type" value="Genomic_DNA"/>
</dbReference>
<dbReference type="PIR" id="S36895">
    <property type="entry name" value="S36895"/>
</dbReference>
<dbReference type="RefSeq" id="NP_854383.1">
    <property type="nucleotide sequence ID" value="NC_002945.3"/>
</dbReference>
<dbReference type="RefSeq" id="WP_003403584.1">
    <property type="nucleotide sequence ID" value="NC_002945.4"/>
</dbReference>
<dbReference type="SMR" id="P0A5X5"/>
<dbReference type="GeneID" id="45424670"/>
<dbReference type="KEGG" id="mbo:BQ2027_MB0725"/>
<dbReference type="PATRIC" id="fig|233413.5.peg.791"/>
<dbReference type="Proteomes" id="UP000001419">
    <property type="component" value="Chromosome"/>
</dbReference>
<dbReference type="GO" id="GO:0005737">
    <property type="term" value="C:cytoplasm"/>
    <property type="evidence" value="ECO:0007669"/>
    <property type="project" value="UniProtKB-ARBA"/>
</dbReference>
<dbReference type="GO" id="GO:0015935">
    <property type="term" value="C:small ribosomal subunit"/>
    <property type="evidence" value="ECO:0007669"/>
    <property type="project" value="InterPro"/>
</dbReference>
<dbReference type="GO" id="GO:0019843">
    <property type="term" value="F:rRNA binding"/>
    <property type="evidence" value="ECO:0007669"/>
    <property type="project" value="UniProtKB-UniRule"/>
</dbReference>
<dbReference type="GO" id="GO:0003735">
    <property type="term" value="F:structural constituent of ribosome"/>
    <property type="evidence" value="ECO:0007669"/>
    <property type="project" value="InterPro"/>
</dbReference>
<dbReference type="GO" id="GO:0000028">
    <property type="term" value="P:ribosomal small subunit assembly"/>
    <property type="evidence" value="ECO:0007669"/>
    <property type="project" value="TreeGrafter"/>
</dbReference>
<dbReference type="GO" id="GO:0006412">
    <property type="term" value="P:translation"/>
    <property type="evidence" value="ECO:0007669"/>
    <property type="project" value="UniProtKB-UniRule"/>
</dbReference>
<dbReference type="FunFam" id="3.30.860.10:FF:000001">
    <property type="entry name" value="30S ribosomal protein S19"/>
    <property type="match status" value="1"/>
</dbReference>
<dbReference type="Gene3D" id="3.30.860.10">
    <property type="entry name" value="30s Ribosomal Protein S19, Chain A"/>
    <property type="match status" value="1"/>
</dbReference>
<dbReference type="HAMAP" id="MF_00531">
    <property type="entry name" value="Ribosomal_uS19"/>
    <property type="match status" value="1"/>
</dbReference>
<dbReference type="InterPro" id="IPR002222">
    <property type="entry name" value="Ribosomal_uS19"/>
</dbReference>
<dbReference type="InterPro" id="IPR005732">
    <property type="entry name" value="Ribosomal_uS19_bac-type"/>
</dbReference>
<dbReference type="InterPro" id="IPR020934">
    <property type="entry name" value="Ribosomal_uS19_CS"/>
</dbReference>
<dbReference type="InterPro" id="IPR023575">
    <property type="entry name" value="Ribosomal_uS19_SF"/>
</dbReference>
<dbReference type="NCBIfam" id="TIGR01050">
    <property type="entry name" value="rpsS_bact"/>
    <property type="match status" value="1"/>
</dbReference>
<dbReference type="PANTHER" id="PTHR11880">
    <property type="entry name" value="RIBOSOMAL PROTEIN S19P FAMILY MEMBER"/>
    <property type="match status" value="1"/>
</dbReference>
<dbReference type="PANTHER" id="PTHR11880:SF8">
    <property type="entry name" value="SMALL RIBOSOMAL SUBUNIT PROTEIN US19M"/>
    <property type="match status" value="1"/>
</dbReference>
<dbReference type="Pfam" id="PF00203">
    <property type="entry name" value="Ribosomal_S19"/>
    <property type="match status" value="1"/>
</dbReference>
<dbReference type="PIRSF" id="PIRSF002144">
    <property type="entry name" value="Ribosomal_S19"/>
    <property type="match status" value="1"/>
</dbReference>
<dbReference type="PRINTS" id="PR00975">
    <property type="entry name" value="RIBOSOMALS19"/>
</dbReference>
<dbReference type="SUPFAM" id="SSF54570">
    <property type="entry name" value="Ribosomal protein S19"/>
    <property type="match status" value="1"/>
</dbReference>
<dbReference type="PROSITE" id="PS00323">
    <property type="entry name" value="RIBOSOMAL_S19"/>
    <property type="match status" value="1"/>
</dbReference>
<protein>
    <recommendedName>
        <fullName evidence="2">Small ribosomal subunit protein uS19</fullName>
    </recommendedName>
    <alternativeName>
        <fullName>30S ribosomal protein S19</fullName>
    </alternativeName>
</protein>